<proteinExistence type="inferred from homology"/>
<organism>
    <name type="scientific">Methanosphaerula palustris (strain ATCC BAA-1556 / DSM 19958 / E1-9c)</name>
    <dbReference type="NCBI Taxonomy" id="521011"/>
    <lineage>
        <taxon>Archaea</taxon>
        <taxon>Methanobacteriati</taxon>
        <taxon>Methanobacteriota</taxon>
        <taxon>Stenosarchaea group</taxon>
        <taxon>Methanomicrobia</taxon>
        <taxon>Methanomicrobiales</taxon>
        <taxon>Methanoregulaceae</taxon>
        <taxon>Methanosphaerula</taxon>
    </lineage>
</organism>
<name>RS8_METPE</name>
<gene>
    <name evidence="1" type="primary">rps8</name>
    <name type="ordered locus">Mpal_0457</name>
</gene>
<dbReference type="EMBL" id="CP001338">
    <property type="protein sequence ID" value="ACL15831.1"/>
    <property type="molecule type" value="Genomic_DNA"/>
</dbReference>
<dbReference type="RefSeq" id="WP_012617150.1">
    <property type="nucleotide sequence ID" value="NC_011832.1"/>
</dbReference>
<dbReference type="SMR" id="B8GKE8"/>
<dbReference type="STRING" id="521011.Mpal_0457"/>
<dbReference type="GeneID" id="7272781"/>
<dbReference type="KEGG" id="mpl:Mpal_0457"/>
<dbReference type="eggNOG" id="arCOG04091">
    <property type="taxonomic scope" value="Archaea"/>
</dbReference>
<dbReference type="HOGENOM" id="CLU_098428_1_1_2"/>
<dbReference type="OrthoDB" id="5670at2157"/>
<dbReference type="Proteomes" id="UP000002457">
    <property type="component" value="Chromosome"/>
</dbReference>
<dbReference type="GO" id="GO:1990904">
    <property type="term" value="C:ribonucleoprotein complex"/>
    <property type="evidence" value="ECO:0007669"/>
    <property type="project" value="UniProtKB-KW"/>
</dbReference>
<dbReference type="GO" id="GO:0005840">
    <property type="term" value="C:ribosome"/>
    <property type="evidence" value="ECO:0007669"/>
    <property type="project" value="UniProtKB-KW"/>
</dbReference>
<dbReference type="GO" id="GO:0019843">
    <property type="term" value="F:rRNA binding"/>
    <property type="evidence" value="ECO:0007669"/>
    <property type="project" value="UniProtKB-UniRule"/>
</dbReference>
<dbReference type="GO" id="GO:0003735">
    <property type="term" value="F:structural constituent of ribosome"/>
    <property type="evidence" value="ECO:0007669"/>
    <property type="project" value="InterPro"/>
</dbReference>
<dbReference type="GO" id="GO:0006412">
    <property type="term" value="P:translation"/>
    <property type="evidence" value="ECO:0007669"/>
    <property type="project" value="UniProtKB-UniRule"/>
</dbReference>
<dbReference type="FunFam" id="3.30.1490.10:FF:000002">
    <property type="entry name" value="40S ribosomal protein S15a"/>
    <property type="match status" value="1"/>
</dbReference>
<dbReference type="Gene3D" id="3.30.1370.30">
    <property type="match status" value="1"/>
</dbReference>
<dbReference type="Gene3D" id="3.30.1490.10">
    <property type="match status" value="1"/>
</dbReference>
<dbReference type="HAMAP" id="MF_01302_A">
    <property type="entry name" value="Ribosomal_uS8_A"/>
    <property type="match status" value="1"/>
</dbReference>
<dbReference type="InterPro" id="IPR000630">
    <property type="entry name" value="Ribosomal_uS8"/>
</dbReference>
<dbReference type="InterPro" id="IPR047863">
    <property type="entry name" value="Ribosomal_uS8_CS"/>
</dbReference>
<dbReference type="InterPro" id="IPR035987">
    <property type="entry name" value="Ribosomal_uS8_sf"/>
</dbReference>
<dbReference type="NCBIfam" id="NF003115">
    <property type="entry name" value="PRK04034.1"/>
    <property type="match status" value="1"/>
</dbReference>
<dbReference type="PANTHER" id="PTHR11758">
    <property type="entry name" value="40S RIBOSOMAL PROTEIN S15A"/>
    <property type="match status" value="1"/>
</dbReference>
<dbReference type="Pfam" id="PF00410">
    <property type="entry name" value="Ribosomal_S8"/>
    <property type="match status" value="1"/>
</dbReference>
<dbReference type="SUPFAM" id="SSF56047">
    <property type="entry name" value="Ribosomal protein S8"/>
    <property type="match status" value="1"/>
</dbReference>
<dbReference type="PROSITE" id="PS00053">
    <property type="entry name" value="RIBOSOMAL_S8"/>
    <property type="match status" value="1"/>
</dbReference>
<reference key="1">
    <citation type="journal article" date="2015" name="Genome Announc.">
        <title>Complete Genome Sequence of Methanosphaerula palustris E1-9CT, a Hydrogenotrophic Methanogen Isolated from a Minerotrophic Fen Peatland.</title>
        <authorList>
            <person name="Cadillo-Quiroz H."/>
            <person name="Browne P."/>
            <person name="Kyrpides N."/>
            <person name="Woyke T."/>
            <person name="Goodwin L."/>
            <person name="Detter C."/>
            <person name="Yavitt J.B."/>
            <person name="Zinder S.H."/>
        </authorList>
    </citation>
    <scope>NUCLEOTIDE SEQUENCE [LARGE SCALE GENOMIC DNA]</scope>
    <source>
        <strain>ATCC BAA-1556 / DSM 19958 / E1-9c</strain>
    </source>
</reference>
<feature type="chain" id="PRO_1000165339" description="Small ribosomal subunit protein uS8">
    <location>
        <begin position="1"/>
        <end position="130"/>
    </location>
</feature>
<evidence type="ECO:0000255" key="1">
    <source>
        <dbReference type="HAMAP-Rule" id="MF_01302"/>
    </source>
</evidence>
<evidence type="ECO:0000305" key="2"/>
<protein>
    <recommendedName>
        <fullName evidence="1">Small ribosomal subunit protein uS8</fullName>
    </recommendedName>
    <alternativeName>
        <fullName evidence="2">30S ribosomal protein S8</fullName>
    </alternativeName>
</protein>
<keyword id="KW-1185">Reference proteome</keyword>
<keyword id="KW-0687">Ribonucleoprotein</keyword>
<keyword id="KW-0689">Ribosomal protein</keyword>
<keyword id="KW-0694">RNA-binding</keyword>
<keyword id="KW-0699">rRNA-binding</keyword>
<comment type="function">
    <text evidence="1">One of the primary rRNA binding proteins, it binds directly to 16S rRNA central domain where it helps coordinate assembly of the platform of the 30S subunit.</text>
</comment>
<comment type="subunit">
    <text evidence="1">Part of the 30S ribosomal subunit.</text>
</comment>
<comment type="similarity">
    <text evidence="1">Belongs to the universal ribosomal protein uS8 family.</text>
</comment>
<accession>B8GKE8</accession>
<sequence length="130" mass="14186">MSRQNTIADAMSALKNAGDCGKPECILEPSSKLLGAMLRIMQDAGYIGSFDMIDDGRGGQFRVHLSGRINKCGAITPRYSVGLDELEYWETRYLPGKNFGLLILSTSRGVLTHNQARQNGIGGELLGFVY</sequence>